<comment type="catalytic activity">
    <reaction>
        <text>ATP + H2O = ADP + phosphate + H(+)</text>
        <dbReference type="Rhea" id="RHEA:13065"/>
        <dbReference type="ChEBI" id="CHEBI:15377"/>
        <dbReference type="ChEBI" id="CHEBI:15378"/>
        <dbReference type="ChEBI" id="CHEBI:30616"/>
        <dbReference type="ChEBI" id="CHEBI:43474"/>
        <dbReference type="ChEBI" id="CHEBI:456216"/>
        <dbReference type="EC" id="3.6.4.13"/>
    </reaction>
</comment>
<comment type="domain">
    <text>The Q motif is unique to and characteristic of the DEAD box family of RNA helicases and controls ATP binding and hydrolysis.</text>
</comment>
<comment type="similarity">
    <text evidence="4">Belongs to the DEAD box helicase family. DDX3/DED1 subfamily.</text>
</comment>
<feature type="initiator methionine" description="Removed" evidence="5">
    <location>
        <position position="1"/>
    </location>
</feature>
<feature type="chain" id="PRO_0000239192" description="DEAD-box ATP-dependent RNA helicase 52">
    <location>
        <begin position="2"/>
        <end position="646"/>
    </location>
</feature>
<feature type="domain" description="Helicase ATP-binding" evidence="1">
    <location>
        <begin position="177"/>
        <end position="361"/>
    </location>
</feature>
<feature type="domain" description="Helicase C-terminal" evidence="2">
    <location>
        <begin position="388"/>
        <end position="539"/>
    </location>
</feature>
<feature type="region of interest" description="Disordered" evidence="3">
    <location>
        <begin position="1"/>
        <end position="64"/>
    </location>
</feature>
<feature type="region of interest" description="Disordered" evidence="3">
    <location>
        <begin position="76"/>
        <end position="117"/>
    </location>
</feature>
<feature type="short sequence motif" description="Q motif">
    <location>
        <begin position="146"/>
        <end position="174"/>
    </location>
</feature>
<feature type="short sequence motif" description="DEAD box">
    <location>
        <begin position="305"/>
        <end position="308"/>
    </location>
</feature>
<feature type="compositionally biased region" description="Gly residues" evidence="3">
    <location>
        <begin position="54"/>
        <end position="64"/>
    </location>
</feature>
<feature type="compositionally biased region" description="Gly residues" evidence="3">
    <location>
        <begin position="76"/>
        <end position="87"/>
    </location>
</feature>
<feature type="binding site" evidence="1">
    <location>
        <begin position="190"/>
        <end position="197"/>
    </location>
    <ligand>
        <name>ATP</name>
        <dbReference type="ChEBI" id="CHEBI:30616"/>
    </ligand>
</feature>
<feature type="modified residue" description="N-acetylserine" evidence="5">
    <location>
        <position position="2"/>
    </location>
</feature>
<evidence type="ECO:0000255" key="1">
    <source>
        <dbReference type="PROSITE-ProRule" id="PRU00541"/>
    </source>
</evidence>
<evidence type="ECO:0000255" key="2">
    <source>
        <dbReference type="PROSITE-ProRule" id="PRU00542"/>
    </source>
</evidence>
<evidence type="ECO:0000256" key="3">
    <source>
        <dbReference type="SAM" id="MobiDB-lite"/>
    </source>
</evidence>
<evidence type="ECO:0000305" key="4"/>
<evidence type="ECO:0007744" key="5">
    <source>
    </source>
</evidence>
<reference key="1">
    <citation type="journal article" date="2000" name="Nature">
        <title>Sequence and analysis of chromosome 3 of the plant Arabidopsis thaliana.</title>
        <authorList>
            <person name="Salanoubat M."/>
            <person name="Lemcke K."/>
            <person name="Rieger M."/>
            <person name="Ansorge W."/>
            <person name="Unseld M."/>
            <person name="Fartmann B."/>
            <person name="Valle G."/>
            <person name="Bloecker H."/>
            <person name="Perez-Alonso M."/>
            <person name="Obermaier B."/>
            <person name="Delseny M."/>
            <person name="Boutry M."/>
            <person name="Grivell L.A."/>
            <person name="Mache R."/>
            <person name="Puigdomenech P."/>
            <person name="De Simone V."/>
            <person name="Choisne N."/>
            <person name="Artiguenave F."/>
            <person name="Robert C."/>
            <person name="Brottier P."/>
            <person name="Wincker P."/>
            <person name="Cattolico L."/>
            <person name="Weissenbach J."/>
            <person name="Saurin W."/>
            <person name="Quetier F."/>
            <person name="Schaefer M."/>
            <person name="Mueller-Auer S."/>
            <person name="Gabel C."/>
            <person name="Fuchs M."/>
            <person name="Benes V."/>
            <person name="Wurmbach E."/>
            <person name="Drzonek H."/>
            <person name="Erfle H."/>
            <person name="Jordan N."/>
            <person name="Bangert S."/>
            <person name="Wiedelmann R."/>
            <person name="Kranz H."/>
            <person name="Voss H."/>
            <person name="Holland R."/>
            <person name="Brandt P."/>
            <person name="Nyakatura G."/>
            <person name="Vezzi A."/>
            <person name="D'Angelo M."/>
            <person name="Pallavicini A."/>
            <person name="Toppo S."/>
            <person name="Simionati B."/>
            <person name="Conrad A."/>
            <person name="Hornischer K."/>
            <person name="Kauer G."/>
            <person name="Loehnert T.-H."/>
            <person name="Nordsiek G."/>
            <person name="Reichelt J."/>
            <person name="Scharfe M."/>
            <person name="Schoen O."/>
            <person name="Bargues M."/>
            <person name="Terol J."/>
            <person name="Climent J."/>
            <person name="Navarro P."/>
            <person name="Collado C."/>
            <person name="Perez-Perez A."/>
            <person name="Ottenwaelder B."/>
            <person name="Duchemin D."/>
            <person name="Cooke R."/>
            <person name="Laudie M."/>
            <person name="Berger-Llauro C."/>
            <person name="Purnelle B."/>
            <person name="Masuy D."/>
            <person name="de Haan M."/>
            <person name="Maarse A.C."/>
            <person name="Alcaraz J.-P."/>
            <person name="Cottet A."/>
            <person name="Casacuberta E."/>
            <person name="Monfort A."/>
            <person name="Argiriou A."/>
            <person name="Flores M."/>
            <person name="Liguori R."/>
            <person name="Vitale D."/>
            <person name="Mannhaupt G."/>
            <person name="Haase D."/>
            <person name="Schoof H."/>
            <person name="Rudd S."/>
            <person name="Zaccaria P."/>
            <person name="Mewes H.-W."/>
            <person name="Mayer K.F.X."/>
            <person name="Kaul S."/>
            <person name="Town C.D."/>
            <person name="Koo H.L."/>
            <person name="Tallon L.J."/>
            <person name="Jenkins J."/>
            <person name="Rooney T."/>
            <person name="Rizzo M."/>
            <person name="Walts A."/>
            <person name="Utterback T."/>
            <person name="Fujii C.Y."/>
            <person name="Shea T.P."/>
            <person name="Creasy T.H."/>
            <person name="Haas B."/>
            <person name="Maiti R."/>
            <person name="Wu D."/>
            <person name="Peterson J."/>
            <person name="Van Aken S."/>
            <person name="Pai G."/>
            <person name="Militscher J."/>
            <person name="Sellers P."/>
            <person name="Gill J.E."/>
            <person name="Feldblyum T.V."/>
            <person name="Preuss D."/>
            <person name="Lin X."/>
            <person name="Nierman W.C."/>
            <person name="Salzberg S.L."/>
            <person name="White O."/>
            <person name="Venter J.C."/>
            <person name="Fraser C.M."/>
            <person name="Kaneko T."/>
            <person name="Nakamura Y."/>
            <person name="Sato S."/>
            <person name="Kato T."/>
            <person name="Asamizu E."/>
            <person name="Sasamoto S."/>
            <person name="Kimura T."/>
            <person name="Idesawa K."/>
            <person name="Kawashima K."/>
            <person name="Kishida Y."/>
            <person name="Kiyokawa C."/>
            <person name="Kohara M."/>
            <person name="Matsumoto M."/>
            <person name="Matsuno A."/>
            <person name="Muraki A."/>
            <person name="Nakayama S."/>
            <person name="Nakazaki N."/>
            <person name="Shinpo S."/>
            <person name="Takeuchi C."/>
            <person name="Wada T."/>
            <person name="Watanabe A."/>
            <person name="Yamada M."/>
            <person name="Yasuda M."/>
            <person name="Tabata S."/>
        </authorList>
    </citation>
    <scope>NUCLEOTIDE SEQUENCE [LARGE SCALE GENOMIC DNA]</scope>
    <source>
        <strain>cv. Columbia</strain>
    </source>
</reference>
<reference key="2">
    <citation type="journal article" date="2017" name="Plant J.">
        <title>Araport11: a complete reannotation of the Arabidopsis thaliana reference genome.</title>
        <authorList>
            <person name="Cheng C.Y."/>
            <person name="Krishnakumar V."/>
            <person name="Chan A.P."/>
            <person name="Thibaud-Nissen F."/>
            <person name="Schobel S."/>
            <person name="Town C.D."/>
        </authorList>
    </citation>
    <scope>GENOME REANNOTATION</scope>
    <source>
        <strain>cv. Columbia</strain>
    </source>
</reference>
<reference key="3">
    <citation type="journal article" date="2003" name="Science">
        <title>Empirical analysis of transcriptional activity in the Arabidopsis genome.</title>
        <authorList>
            <person name="Yamada K."/>
            <person name="Lim J."/>
            <person name="Dale J.M."/>
            <person name="Chen H."/>
            <person name="Shinn P."/>
            <person name="Palm C.J."/>
            <person name="Southwick A.M."/>
            <person name="Wu H.C."/>
            <person name="Kim C.J."/>
            <person name="Nguyen M."/>
            <person name="Pham P.K."/>
            <person name="Cheuk R.F."/>
            <person name="Karlin-Newmann G."/>
            <person name="Liu S.X."/>
            <person name="Lam B."/>
            <person name="Sakano H."/>
            <person name="Wu T."/>
            <person name="Yu G."/>
            <person name="Miranda M."/>
            <person name="Quach H.L."/>
            <person name="Tripp M."/>
            <person name="Chang C.H."/>
            <person name="Lee J.M."/>
            <person name="Toriumi M.J."/>
            <person name="Chan M.M."/>
            <person name="Tang C.C."/>
            <person name="Onodera C.S."/>
            <person name="Deng J.M."/>
            <person name="Akiyama K."/>
            <person name="Ansari Y."/>
            <person name="Arakawa T."/>
            <person name="Banh J."/>
            <person name="Banno F."/>
            <person name="Bowser L."/>
            <person name="Brooks S.Y."/>
            <person name="Carninci P."/>
            <person name="Chao Q."/>
            <person name="Choy N."/>
            <person name="Enju A."/>
            <person name="Goldsmith A.D."/>
            <person name="Gurjal M."/>
            <person name="Hansen N.F."/>
            <person name="Hayashizaki Y."/>
            <person name="Johnson-Hopson C."/>
            <person name="Hsuan V.W."/>
            <person name="Iida K."/>
            <person name="Karnes M."/>
            <person name="Khan S."/>
            <person name="Koesema E."/>
            <person name="Ishida J."/>
            <person name="Jiang P.X."/>
            <person name="Jones T."/>
            <person name="Kawai J."/>
            <person name="Kamiya A."/>
            <person name="Meyers C."/>
            <person name="Nakajima M."/>
            <person name="Narusaka M."/>
            <person name="Seki M."/>
            <person name="Sakurai T."/>
            <person name="Satou M."/>
            <person name="Tamse R."/>
            <person name="Vaysberg M."/>
            <person name="Wallender E.K."/>
            <person name="Wong C."/>
            <person name="Yamamura Y."/>
            <person name="Yuan S."/>
            <person name="Shinozaki K."/>
            <person name="Davis R.W."/>
            <person name="Theologis A."/>
            <person name="Ecker J.R."/>
        </authorList>
    </citation>
    <scope>NUCLEOTIDE SEQUENCE [LARGE SCALE MRNA]</scope>
    <source>
        <strain>cv. Columbia</strain>
    </source>
</reference>
<reference key="4">
    <citation type="submission" date="2002-03" db="EMBL/GenBank/DDBJ databases">
        <title>Full-length cDNA from Arabidopsis thaliana.</title>
        <authorList>
            <person name="Brover V.V."/>
            <person name="Troukhan M.E."/>
            <person name="Alexandrov N.A."/>
            <person name="Lu Y.-P."/>
            <person name="Flavell R.B."/>
            <person name="Feldmann K.A."/>
        </authorList>
    </citation>
    <scope>NUCLEOTIDE SEQUENCE [LARGE SCALE MRNA]</scope>
</reference>
<reference key="5">
    <citation type="journal article" date="2004" name="Plant Biotechnol. J.">
        <title>DEAD-box RNA helicases in Arabidopsis thaliana: establishing a link between quantitative expression, gene structure and evolution of a family of genes.</title>
        <authorList>
            <person name="Mingam A."/>
            <person name="Toffano-Nioche C."/>
            <person name="Brunaud V."/>
            <person name="Boudet N."/>
            <person name="Kreis M."/>
            <person name="Lecharny A."/>
        </authorList>
    </citation>
    <scope>GENE FAMILY</scope>
    <scope>NOMENCLATURE</scope>
</reference>
<reference key="6">
    <citation type="journal article" date="2012" name="Mol. Cell. Proteomics">
        <title>Comparative large-scale characterisation of plant vs. mammal proteins reveals similar and idiosyncratic N-alpha acetylation features.</title>
        <authorList>
            <person name="Bienvenut W.V."/>
            <person name="Sumpton D."/>
            <person name="Martinez A."/>
            <person name="Lilla S."/>
            <person name="Espagne C."/>
            <person name="Meinnel T."/>
            <person name="Giglione C."/>
        </authorList>
    </citation>
    <scope>ACETYLATION [LARGE SCALE ANALYSIS] AT SER-2</scope>
    <scope>CLEAVAGE OF INITIATOR METHIONINE [LARGE SCALE ANALYSIS]</scope>
    <scope>IDENTIFICATION BY MASS SPECTROMETRY [LARGE SCALE ANALYSIS]</scope>
</reference>
<reference key="7">
    <citation type="journal article" date="2013" name="PLoS ONE">
        <title>Genome-wide comparative in silico analysis of the RNA helicase gene family in Zea mays and Glycine max: a comparison with Arabidopsis and Oryza sativa.</title>
        <authorList>
            <person name="Xu R."/>
            <person name="Zhang S."/>
            <person name="Huang J."/>
            <person name="Zheng C."/>
        </authorList>
    </citation>
    <scope>GENE FAMILY</scope>
</reference>
<organism>
    <name type="scientific">Arabidopsis thaliana</name>
    <name type="common">Mouse-ear cress</name>
    <dbReference type="NCBI Taxonomy" id="3702"/>
    <lineage>
        <taxon>Eukaryota</taxon>
        <taxon>Viridiplantae</taxon>
        <taxon>Streptophyta</taxon>
        <taxon>Embryophyta</taxon>
        <taxon>Tracheophyta</taxon>
        <taxon>Spermatophyta</taxon>
        <taxon>Magnoliopsida</taxon>
        <taxon>eudicotyledons</taxon>
        <taxon>Gunneridae</taxon>
        <taxon>Pentapetalae</taxon>
        <taxon>rosids</taxon>
        <taxon>malvids</taxon>
        <taxon>Brassicales</taxon>
        <taxon>Brassicaceae</taxon>
        <taxon>Camelineae</taxon>
        <taxon>Arabidopsis</taxon>
    </lineage>
</organism>
<accession>Q9M2F9</accession>
<sequence>MSSNSWADVSESERAPSGGGWGYSRPSRTNYVPPHLRSRTPSSEFVAPSPGNNDRGGYGGANSGYGGRGQGYGGRGSGYGGRGGPVGGWNARSGGWDRRDTETNPFGNDGNADPAVNEQENTVINFEAYEDIPIETSGDNVPPPVNTFAEIDLGEALNLNIQRCKYVKPTPVQRNAIPILAAGRDLMACAQTGSGKTAAFCFPIISGIMKDQHIERPRGVRGVYPLAVILSPTRELACQIHDEARKFSYQTGVKVVVAYGGTPVNQQIRELERGVDILVATPGRLNDLLERGRVSLQMVRFLALDEADRMLDMGFEPQIRKIVQQMDMPPPGVRQTMLFSATFPREIQRLASDFLSNYIFLAVGRVGSSTDLIVQRVEFVHDSDKRSHLMDLLHAQRENGNQGKQALTLVFVETKKGADSLENWLCINGFPATTIHGDRSQQEREVALRSFKTGRTPILVATDVAARGLDIPHVAHVVNFDLPNDIDDYVHRIGRTGRAGNSGLATAFFNDNNTTMAKPLAELMQEANQEVPDWLTRYASRASFGGGKNRRSGGRFGGRDFRRESFSRGGGGADYYGGGGGYGGVPGGGYGAMPGGYGPVPGGGYGNVPGGGYAPYGRGGGAYYGPGGYGTVPNQGYGPGVASAWD</sequence>
<dbReference type="EC" id="3.6.4.13"/>
<dbReference type="EMBL" id="AL137082">
    <property type="protein sequence ID" value="CAB68195.1"/>
    <property type="molecule type" value="Genomic_DNA"/>
</dbReference>
<dbReference type="EMBL" id="CP002686">
    <property type="protein sequence ID" value="AEE79800.1"/>
    <property type="molecule type" value="Genomic_DNA"/>
</dbReference>
<dbReference type="EMBL" id="AY049285">
    <property type="protein sequence ID" value="AAK83627.1"/>
    <property type="molecule type" value="mRNA"/>
</dbReference>
<dbReference type="EMBL" id="BT002731">
    <property type="protein sequence ID" value="AAO11647.1"/>
    <property type="molecule type" value="mRNA"/>
</dbReference>
<dbReference type="EMBL" id="AY088132">
    <property type="protein sequence ID" value="AAM65677.1"/>
    <property type="molecule type" value="mRNA"/>
</dbReference>
<dbReference type="PIR" id="T45677">
    <property type="entry name" value="T45677"/>
</dbReference>
<dbReference type="RefSeq" id="NP_191416.1">
    <property type="nucleotide sequence ID" value="NM_115719.3"/>
</dbReference>
<dbReference type="SMR" id="Q9M2F9"/>
<dbReference type="BioGRID" id="10341">
    <property type="interactions" value="9"/>
</dbReference>
<dbReference type="FunCoup" id="Q9M2F9">
    <property type="interactions" value="3113"/>
</dbReference>
<dbReference type="STRING" id="3702.Q9M2F9"/>
<dbReference type="GlyGen" id="Q9M2F9">
    <property type="glycosylation" value="3 sites, 1 O-linked glycan (2 sites)"/>
</dbReference>
<dbReference type="iPTMnet" id="Q9M2F9"/>
<dbReference type="PaxDb" id="3702-AT3G58570.1"/>
<dbReference type="ProteomicsDB" id="236946"/>
<dbReference type="EnsemblPlants" id="AT3G58570.1">
    <property type="protein sequence ID" value="AT3G58570.1"/>
    <property type="gene ID" value="AT3G58570"/>
</dbReference>
<dbReference type="GeneID" id="825026"/>
<dbReference type="Gramene" id="AT3G58570.1">
    <property type="protein sequence ID" value="AT3G58570.1"/>
    <property type="gene ID" value="AT3G58570"/>
</dbReference>
<dbReference type="KEGG" id="ath:AT3G58570"/>
<dbReference type="Araport" id="AT3G58570"/>
<dbReference type="TAIR" id="AT3G58570">
    <property type="gene designation" value="RH52"/>
</dbReference>
<dbReference type="eggNOG" id="KOG0335">
    <property type="taxonomic scope" value="Eukaryota"/>
</dbReference>
<dbReference type="HOGENOM" id="CLU_003041_16_3_1"/>
<dbReference type="InParanoid" id="Q9M2F9"/>
<dbReference type="OMA" id="ASDFMNE"/>
<dbReference type="OrthoDB" id="196131at2759"/>
<dbReference type="PhylomeDB" id="Q9M2F9"/>
<dbReference type="CD-CODE" id="4299E36E">
    <property type="entry name" value="Nucleolus"/>
</dbReference>
<dbReference type="PRO" id="PR:Q9M2F9"/>
<dbReference type="Proteomes" id="UP000006548">
    <property type="component" value="Chromosome 3"/>
</dbReference>
<dbReference type="ExpressionAtlas" id="Q9M2F9">
    <property type="expression patterns" value="baseline and differential"/>
</dbReference>
<dbReference type="GO" id="GO:0005524">
    <property type="term" value="F:ATP binding"/>
    <property type="evidence" value="ECO:0007669"/>
    <property type="project" value="UniProtKB-KW"/>
</dbReference>
<dbReference type="GO" id="GO:0016887">
    <property type="term" value="F:ATP hydrolysis activity"/>
    <property type="evidence" value="ECO:0007669"/>
    <property type="project" value="RHEA"/>
</dbReference>
<dbReference type="GO" id="GO:0003729">
    <property type="term" value="F:mRNA binding"/>
    <property type="evidence" value="ECO:0000314"/>
    <property type="project" value="TAIR"/>
</dbReference>
<dbReference type="GO" id="GO:0003724">
    <property type="term" value="F:RNA helicase activity"/>
    <property type="evidence" value="ECO:0007669"/>
    <property type="project" value="UniProtKB-EC"/>
</dbReference>
<dbReference type="CDD" id="cd17967">
    <property type="entry name" value="DEADc_DDX3_DDX4"/>
    <property type="match status" value="1"/>
</dbReference>
<dbReference type="CDD" id="cd18787">
    <property type="entry name" value="SF2_C_DEAD"/>
    <property type="match status" value="1"/>
</dbReference>
<dbReference type="FunFam" id="3.40.50.300:FF:000008">
    <property type="entry name" value="ATP-dependent RNA helicase RhlB"/>
    <property type="match status" value="1"/>
</dbReference>
<dbReference type="FunFam" id="3.40.50.300:FF:000397">
    <property type="entry name" value="Probable ATP-dependent RNA helicase DDX4"/>
    <property type="match status" value="1"/>
</dbReference>
<dbReference type="Gene3D" id="3.40.50.300">
    <property type="entry name" value="P-loop containing nucleotide triphosphate hydrolases"/>
    <property type="match status" value="2"/>
</dbReference>
<dbReference type="InterPro" id="IPR011545">
    <property type="entry name" value="DEAD/DEAH_box_helicase_dom"/>
</dbReference>
<dbReference type="InterPro" id="IPR044763">
    <property type="entry name" value="Ded1/Dbp1_DEADc"/>
</dbReference>
<dbReference type="InterPro" id="IPR014001">
    <property type="entry name" value="Helicase_ATP-bd"/>
</dbReference>
<dbReference type="InterPro" id="IPR001650">
    <property type="entry name" value="Helicase_C-like"/>
</dbReference>
<dbReference type="InterPro" id="IPR027417">
    <property type="entry name" value="P-loop_NTPase"/>
</dbReference>
<dbReference type="InterPro" id="IPR014014">
    <property type="entry name" value="RNA_helicase_DEAD_Q_motif"/>
</dbReference>
<dbReference type="PANTHER" id="PTHR47958">
    <property type="entry name" value="ATP-DEPENDENT RNA HELICASE DBP3"/>
    <property type="match status" value="1"/>
</dbReference>
<dbReference type="Pfam" id="PF00270">
    <property type="entry name" value="DEAD"/>
    <property type="match status" value="1"/>
</dbReference>
<dbReference type="Pfam" id="PF00271">
    <property type="entry name" value="Helicase_C"/>
    <property type="match status" value="1"/>
</dbReference>
<dbReference type="SMART" id="SM00487">
    <property type="entry name" value="DEXDc"/>
    <property type="match status" value="1"/>
</dbReference>
<dbReference type="SMART" id="SM00490">
    <property type="entry name" value="HELICc"/>
    <property type="match status" value="1"/>
</dbReference>
<dbReference type="SUPFAM" id="SSF52540">
    <property type="entry name" value="P-loop containing nucleoside triphosphate hydrolases"/>
    <property type="match status" value="1"/>
</dbReference>
<dbReference type="PROSITE" id="PS51192">
    <property type="entry name" value="HELICASE_ATP_BIND_1"/>
    <property type="match status" value="1"/>
</dbReference>
<dbReference type="PROSITE" id="PS51194">
    <property type="entry name" value="HELICASE_CTER"/>
    <property type="match status" value="1"/>
</dbReference>
<dbReference type="PROSITE" id="PS51195">
    <property type="entry name" value="Q_MOTIF"/>
    <property type="match status" value="1"/>
</dbReference>
<protein>
    <recommendedName>
        <fullName>DEAD-box ATP-dependent RNA helicase 52</fullName>
        <ecNumber>3.6.4.13</ecNumber>
    </recommendedName>
</protein>
<proteinExistence type="evidence at protein level"/>
<name>RH52_ARATH</name>
<keyword id="KW-0007">Acetylation</keyword>
<keyword id="KW-0067">ATP-binding</keyword>
<keyword id="KW-0347">Helicase</keyword>
<keyword id="KW-0378">Hydrolase</keyword>
<keyword id="KW-0547">Nucleotide-binding</keyword>
<keyword id="KW-1185">Reference proteome</keyword>
<keyword id="KW-0694">RNA-binding</keyword>
<gene>
    <name type="primary">RH52</name>
    <name type="ordered locus">At3g58570</name>
    <name type="ORF">F14P22.160</name>
</gene>